<proteinExistence type="inferred from homology"/>
<sequence>MPRPTGKKFDKRRQQQNPLFKRKKFCRFTAAGVDQIDYKDTETLKDFIGENGKITPARLTGTKAHYQRQLDTAIKRARFLALLPYTDQHKA</sequence>
<gene>
    <name evidence="1" type="primary">rpsR</name>
    <name type="ordered locus">Bamb_1809</name>
</gene>
<feature type="chain" id="PRO_1000003459" description="Small ribosomal subunit protein bS18">
    <location>
        <begin position="1"/>
        <end position="91"/>
    </location>
</feature>
<reference key="1">
    <citation type="submission" date="2006-08" db="EMBL/GenBank/DDBJ databases">
        <title>Complete sequence of chromosome 1 of Burkholderia cepacia AMMD.</title>
        <authorList>
            <person name="Copeland A."/>
            <person name="Lucas S."/>
            <person name="Lapidus A."/>
            <person name="Barry K."/>
            <person name="Detter J.C."/>
            <person name="Glavina del Rio T."/>
            <person name="Hammon N."/>
            <person name="Israni S."/>
            <person name="Pitluck S."/>
            <person name="Bruce D."/>
            <person name="Chain P."/>
            <person name="Malfatti S."/>
            <person name="Shin M."/>
            <person name="Vergez L."/>
            <person name="Schmutz J."/>
            <person name="Larimer F."/>
            <person name="Land M."/>
            <person name="Hauser L."/>
            <person name="Kyrpides N."/>
            <person name="Kim E."/>
            <person name="Parke J."/>
            <person name="Coenye T."/>
            <person name="Konstantinidis K."/>
            <person name="Ramette A."/>
            <person name="Tiedje J."/>
            <person name="Richardson P."/>
        </authorList>
    </citation>
    <scope>NUCLEOTIDE SEQUENCE [LARGE SCALE GENOMIC DNA]</scope>
    <source>
        <strain>ATCC BAA-244 / DSM 16087 / CCUG 44356 / LMG 19182 / AMMD</strain>
    </source>
</reference>
<protein>
    <recommendedName>
        <fullName evidence="1">Small ribosomal subunit protein bS18</fullName>
    </recommendedName>
    <alternativeName>
        <fullName evidence="2">30S ribosomal protein S18</fullName>
    </alternativeName>
</protein>
<accession>Q0BEQ8</accession>
<organism>
    <name type="scientific">Burkholderia ambifaria (strain ATCC BAA-244 / DSM 16087 / CCUG 44356 / LMG 19182 / AMMD)</name>
    <name type="common">Burkholderia cepacia (strain AMMD)</name>
    <dbReference type="NCBI Taxonomy" id="339670"/>
    <lineage>
        <taxon>Bacteria</taxon>
        <taxon>Pseudomonadati</taxon>
        <taxon>Pseudomonadota</taxon>
        <taxon>Betaproteobacteria</taxon>
        <taxon>Burkholderiales</taxon>
        <taxon>Burkholderiaceae</taxon>
        <taxon>Burkholderia</taxon>
        <taxon>Burkholderia cepacia complex</taxon>
    </lineage>
</organism>
<comment type="function">
    <text evidence="1">Binds as a heterodimer with protein bS6 to the central domain of the 16S rRNA, where it helps stabilize the platform of the 30S subunit.</text>
</comment>
<comment type="subunit">
    <text evidence="1">Part of the 30S ribosomal subunit. Forms a tight heterodimer with protein bS6.</text>
</comment>
<comment type="similarity">
    <text evidence="1">Belongs to the bacterial ribosomal protein bS18 family.</text>
</comment>
<dbReference type="EMBL" id="CP000440">
    <property type="protein sequence ID" value="ABI87365.1"/>
    <property type="molecule type" value="Genomic_DNA"/>
</dbReference>
<dbReference type="RefSeq" id="WP_011657068.1">
    <property type="nucleotide sequence ID" value="NZ_CP009798.1"/>
</dbReference>
<dbReference type="SMR" id="Q0BEQ8"/>
<dbReference type="GeneID" id="93085985"/>
<dbReference type="KEGG" id="bam:Bamb_1809"/>
<dbReference type="PATRIC" id="fig|339670.21.peg.3150"/>
<dbReference type="eggNOG" id="COG0238">
    <property type="taxonomic scope" value="Bacteria"/>
</dbReference>
<dbReference type="Proteomes" id="UP000000662">
    <property type="component" value="Chromosome 1"/>
</dbReference>
<dbReference type="GO" id="GO:0022627">
    <property type="term" value="C:cytosolic small ribosomal subunit"/>
    <property type="evidence" value="ECO:0007669"/>
    <property type="project" value="TreeGrafter"/>
</dbReference>
<dbReference type="GO" id="GO:0070181">
    <property type="term" value="F:small ribosomal subunit rRNA binding"/>
    <property type="evidence" value="ECO:0007669"/>
    <property type="project" value="TreeGrafter"/>
</dbReference>
<dbReference type="GO" id="GO:0003735">
    <property type="term" value="F:structural constituent of ribosome"/>
    <property type="evidence" value="ECO:0007669"/>
    <property type="project" value="InterPro"/>
</dbReference>
<dbReference type="GO" id="GO:0006412">
    <property type="term" value="P:translation"/>
    <property type="evidence" value="ECO:0007669"/>
    <property type="project" value="UniProtKB-UniRule"/>
</dbReference>
<dbReference type="Gene3D" id="4.10.640.10">
    <property type="entry name" value="Ribosomal protein S18"/>
    <property type="match status" value="1"/>
</dbReference>
<dbReference type="HAMAP" id="MF_00270">
    <property type="entry name" value="Ribosomal_bS18"/>
    <property type="match status" value="1"/>
</dbReference>
<dbReference type="InterPro" id="IPR001648">
    <property type="entry name" value="Ribosomal_bS18"/>
</dbReference>
<dbReference type="InterPro" id="IPR018275">
    <property type="entry name" value="Ribosomal_bS18_CS"/>
</dbReference>
<dbReference type="InterPro" id="IPR036870">
    <property type="entry name" value="Ribosomal_bS18_sf"/>
</dbReference>
<dbReference type="NCBIfam" id="TIGR00165">
    <property type="entry name" value="S18"/>
    <property type="match status" value="1"/>
</dbReference>
<dbReference type="PANTHER" id="PTHR13479">
    <property type="entry name" value="30S RIBOSOMAL PROTEIN S18"/>
    <property type="match status" value="1"/>
</dbReference>
<dbReference type="PANTHER" id="PTHR13479:SF40">
    <property type="entry name" value="SMALL RIBOSOMAL SUBUNIT PROTEIN BS18M"/>
    <property type="match status" value="1"/>
</dbReference>
<dbReference type="Pfam" id="PF01084">
    <property type="entry name" value="Ribosomal_S18"/>
    <property type="match status" value="1"/>
</dbReference>
<dbReference type="PRINTS" id="PR00974">
    <property type="entry name" value="RIBOSOMALS18"/>
</dbReference>
<dbReference type="SUPFAM" id="SSF46911">
    <property type="entry name" value="Ribosomal protein S18"/>
    <property type="match status" value="1"/>
</dbReference>
<dbReference type="PROSITE" id="PS00057">
    <property type="entry name" value="RIBOSOMAL_S18"/>
    <property type="match status" value="1"/>
</dbReference>
<evidence type="ECO:0000255" key="1">
    <source>
        <dbReference type="HAMAP-Rule" id="MF_00270"/>
    </source>
</evidence>
<evidence type="ECO:0000305" key="2"/>
<keyword id="KW-0687">Ribonucleoprotein</keyword>
<keyword id="KW-0689">Ribosomal protein</keyword>
<keyword id="KW-0694">RNA-binding</keyword>
<keyword id="KW-0699">rRNA-binding</keyword>
<name>RS18_BURCM</name>